<sequence length="334" mass="37014">MTTVYYDQDVKTDALQGKKIAVVGYGSQGHAHAQNLKDNGYDVVIGIRPGRSFDKAKEDGFDVFPVAEAVKQADVIMVLLPDEIQGDVYKNEIEPNLEKHNALAFAHGFNIHFGVIQPPADVDVFLVAPKGPGHLVRRTFVEGSAVPSLFGIQQDASGQARNIALSYAKGIGATRAGVIETTFKEETETDLFGEQAVLCGGVSKLIQSGFETLVEAGYQPELAYFEVLHEMKLIVDLMYEGGMENVRYSISNTAEFGDYVSGPRVITPDVKENMKAVLTDIQNGNFSNRFIEDNKNGFKEFYKLREEQHGHQIEKVGRELREMMPFIKSKSIEK</sequence>
<comment type="function">
    <text evidence="1">Involved in the biosynthesis of branched-chain amino acids (BCAA). Catalyzes an alkyl-migration followed by a ketol-acid reduction of (S)-2-acetolactate (S2AL) to yield (R)-2,3-dihydroxy-isovalerate. In the isomerase reaction, S2AL is rearranged via a Mg-dependent methyl migration to produce 3-hydroxy-3-methyl-2-ketobutyrate (HMKB). In the reductase reaction, this 2-ketoacid undergoes a metal-dependent reduction by NADPH to yield (R)-2,3-dihydroxy-isovalerate.</text>
</comment>
<comment type="catalytic activity">
    <reaction evidence="1">
        <text>(2R)-2,3-dihydroxy-3-methylbutanoate + NADP(+) = (2S)-2-acetolactate + NADPH + H(+)</text>
        <dbReference type="Rhea" id="RHEA:22068"/>
        <dbReference type="ChEBI" id="CHEBI:15378"/>
        <dbReference type="ChEBI" id="CHEBI:49072"/>
        <dbReference type="ChEBI" id="CHEBI:57783"/>
        <dbReference type="ChEBI" id="CHEBI:58349"/>
        <dbReference type="ChEBI" id="CHEBI:58476"/>
        <dbReference type="EC" id="1.1.1.86"/>
    </reaction>
</comment>
<comment type="catalytic activity">
    <reaction evidence="1">
        <text>(2R,3R)-2,3-dihydroxy-3-methylpentanoate + NADP(+) = (S)-2-ethyl-2-hydroxy-3-oxobutanoate + NADPH + H(+)</text>
        <dbReference type="Rhea" id="RHEA:13493"/>
        <dbReference type="ChEBI" id="CHEBI:15378"/>
        <dbReference type="ChEBI" id="CHEBI:49256"/>
        <dbReference type="ChEBI" id="CHEBI:49258"/>
        <dbReference type="ChEBI" id="CHEBI:57783"/>
        <dbReference type="ChEBI" id="CHEBI:58349"/>
        <dbReference type="EC" id="1.1.1.86"/>
    </reaction>
</comment>
<comment type="cofactor">
    <cofactor evidence="1">
        <name>Mg(2+)</name>
        <dbReference type="ChEBI" id="CHEBI:18420"/>
    </cofactor>
    <text evidence="1">Binds 2 magnesium ions per subunit.</text>
</comment>
<comment type="pathway">
    <text evidence="1">Amino-acid biosynthesis; L-isoleucine biosynthesis; L-isoleucine from 2-oxobutanoate: step 2/4.</text>
</comment>
<comment type="pathway">
    <text evidence="1">Amino-acid biosynthesis; L-valine biosynthesis; L-valine from pyruvate: step 2/4.</text>
</comment>
<comment type="similarity">
    <text evidence="1">Belongs to the ketol-acid reductoisomerase family.</text>
</comment>
<accession>A6U3E1</accession>
<evidence type="ECO:0000255" key="1">
    <source>
        <dbReference type="HAMAP-Rule" id="MF_00435"/>
    </source>
</evidence>
<evidence type="ECO:0000255" key="2">
    <source>
        <dbReference type="PROSITE-ProRule" id="PRU01197"/>
    </source>
</evidence>
<evidence type="ECO:0000255" key="3">
    <source>
        <dbReference type="PROSITE-ProRule" id="PRU01198"/>
    </source>
</evidence>
<gene>
    <name evidence="1" type="primary">ilvC</name>
    <name type="ordered locus">SaurJH1_2130</name>
</gene>
<name>ILVC_STAA2</name>
<reference key="1">
    <citation type="submission" date="2007-06" db="EMBL/GenBank/DDBJ databases">
        <title>Complete sequence of chromosome of Staphylococcus aureus subsp. aureus JH1.</title>
        <authorList>
            <consortium name="US DOE Joint Genome Institute"/>
            <person name="Copeland A."/>
            <person name="Lucas S."/>
            <person name="Lapidus A."/>
            <person name="Barry K."/>
            <person name="Detter J.C."/>
            <person name="Glavina del Rio T."/>
            <person name="Hammon N."/>
            <person name="Israni S."/>
            <person name="Dalin E."/>
            <person name="Tice H."/>
            <person name="Pitluck S."/>
            <person name="Chain P."/>
            <person name="Malfatti S."/>
            <person name="Shin M."/>
            <person name="Vergez L."/>
            <person name="Schmutz J."/>
            <person name="Larimer F."/>
            <person name="Land M."/>
            <person name="Hauser L."/>
            <person name="Kyrpides N."/>
            <person name="Ivanova N."/>
            <person name="Tomasz A."/>
            <person name="Richardson P."/>
        </authorList>
    </citation>
    <scope>NUCLEOTIDE SEQUENCE [LARGE SCALE GENOMIC DNA]</scope>
    <source>
        <strain>JH1</strain>
    </source>
</reference>
<protein>
    <recommendedName>
        <fullName evidence="1">Ketol-acid reductoisomerase (NADP(+))</fullName>
        <shortName evidence="1">KARI</shortName>
        <ecNumber evidence="1">1.1.1.86</ecNumber>
    </recommendedName>
    <alternativeName>
        <fullName evidence="1">Acetohydroxy-acid isomeroreductase</fullName>
        <shortName evidence="1">AHIR</shortName>
    </alternativeName>
    <alternativeName>
        <fullName evidence="1">Alpha-keto-beta-hydroxylacyl reductoisomerase</fullName>
    </alternativeName>
    <alternativeName>
        <fullName evidence="1">Ketol-acid reductoisomerase type 1</fullName>
    </alternativeName>
    <alternativeName>
        <fullName evidence="1">Ketol-acid reductoisomerase type I</fullName>
    </alternativeName>
</protein>
<feature type="chain" id="PRO_1000080647" description="Ketol-acid reductoisomerase (NADP(+))">
    <location>
        <begin position="1"/>
        <end position="334"/>
    </location>
</feature>
<feature type="domain" description="KARI N-terminal Rossmann" evidence="2">
    <location>
        <begin position="1"/>
        <end position="181"/>
    </location>
</feature>
<feature type="domain" description="KARI C-terminal knotted" evidence="3">
    <location>
        <begin position="182"/>
        <end position="327"/>
    </location>
</feature>
<feature type="active site" evidence="1">
    <location>
        <position position="107"/>
    </location>
</feature>
<feature type="binding site" evidence="1">
    <location>
        <begin position="25"/>
        <end position="28"/>
    </location>
    <ligand>
        <name>NADP(+)</name>
        <dbReference type="ChEBI" id="CHEBI:58349"/>
    </ligand>
</feature>
<feature type="binding site" evidence="1">
    <location>
        <position position="48"/>
    </location>
    <ligand>
        <name>NADP(+)</name>
        <dbReference type="ChEBI" id="CHEBI:58349"/>
    </ligand>
</feature>
<feature type="binding site" evidence="1">
    <location>
        <position position="52"/>
    </location>
    <ligand>
        <name>NADP(+)</name>
        <dbReference type="ChEBI" id="CHEBI:58349"/>
    </ligand>
</feature>
<feature type="binding site" evidence="1">
    <location>
        <begin position="82"/>
        <end position="85"/>
    </location>
    <ligand>
        <name>NADP(+)</name>
        <dbReference type="ChEBI" id="CHEBI:58349"/>
    </ligand>
</feature>
<feature type="binding site" evidence="1">
    <location>
        <position position="133"/>
    </location>
    <ligand>
        <name>NADP(+)</name>
        <dbReference type="ChEBI" id="CHEBI:58349"/>
    </ligand>
</feature>
<feature type="binding site" evidence="1">
    <location>
        <position position="190"/>
    </location>
    <ligand>
        <name>Mg(2+)</name>
        <dbReference type="ChEBI" id="CHEBI:18420"/>
        <label>1</label>
    </ligand>
</feature>
<feature type="binding site" evidence="1">
    <location>
        <position position="190"/>
    </location>
    <ligand>
        <name>Mg(2+)</name>
        <dbReference type="ChEBI" id="CHEBI:18420"/>
        <label>2</label>
    </ligand>
</feature>
<feature type="binding site" evidence="1">
    <location>
        <position position="194"/>
    </location>
    <ligand>
        <name>Mg(2+)</name>
        <dbReference type="ChEBI" id="CHEBI:18420"/>
        <label>1</label>
    </ligand>
</feature>
<feature type="binding site" evidence="1">
    <location>
        <position position="226"/>
    </location>
    <ligand>
        <name>Mg(2+)</name>
        <dbReference type="ChEBI" id="CHEBI:18420"/>
        <label>2</label>
    </ligand>
</feature>
<feature type="binding site" evidence="1">
    <location>
        <position position="230"/>
    </location>
    <ligand>
        <name>Mg(2+)</name>
        <dbReference type="ChEBI" id="CHEBI:18420"/>
        <label>2</label>
    </ligand>
</feature>
<feature type="binding site" evidence="1">
    <location>
        <position position="251"/>
    </location>
    <ligand>
        <name>substrate</name>
    </ligand>
</feature>
<keyword id="KW-0028">Amino-acid biosynthesis</keyword>
<keyword id="KW-0100">Branched-chain amino acid biosynthesis</keyword>
<keyword id="KW-0460">Magnesium</keyword>
<keyword id="KW-0479">Metal-binding</keyword>
<keyword id="KW-0521">NADP</keyword>
<keyword id="KW-0560">Oxidoreductase</keyword>
<dbReference type="EC" id="1.1.1.86" evidence="1"/>
<dbReference type="EMBL" id="CP000736">
    <property type="protein sequence ID" value="ABR52959.1"/>
    <property type="molecule type" value="Genomic_DNA"/>
</dbReference>
<dbReference type="SMR" id="A6U3E1"/>
<dbReference type="KEGG" id="sah:SaurJH1_2130"/>
<dbReference type="HOGENOM" id="CLU_033821_0_1_9"/>
<dbReference type="UniPathway" id="UPA00047">
    <property type="reaction ID" value="UER00056"/>
</dbReference>
<dbReference type="UniPathway" id="UPA00049">
    <property type="reaction ID" value="UER00060"/>
</dbReference>
<dbReference type="GO" id="GO:0005829">
    <property type="term" value="C:cytosol"/>
    <property type="evidence" value="ECO:0007669"/>
    <property type="project" value="TreeGrafter"/>
</dbReference>
<dbReference type="GO" id="GO:0004455">
    <property type="term" value="F:ketol-acid reductoisomerase activity"/>
    <property type="evidence" value="ECO:0007669"/>
    <property type="project" value="UniProtKB-UniRule"/>
</dbReference>
<dbReference type="GO" id="GO:0000287">
    <property type="term" value="F:magnesium ion binding"/>
    <property type="evidence" value="ECO:0007669"/>
    <property type="project" value="UniProtKB-UniRule"/>
</dbReference>
<dbReference type="GO" id="GO:0050661">
    <property type="term" value="F:NADP binding"/>
    <property type="evidence" value="ECO:0007669"/>
    <property type="project" value="InterPro"/>
</dbReference>
<dbReference type="GO" id="GO:0009097">
    <property type="term" value="P:isoleucine biosynthetic process"/>
    <property type="evidence" value="ECO:0007669"/>
    <property type="project" value="UniProtKB-UniRule"/>
</dbReference>
<dbReference type="GO" id="GO:0009099">
    <property type="term" value="P:L-valine biosynthetic process"/>
    <property type="evidence" value="ECO:0007669"/>
    <property type="project" value="UniProtKB-UniRule"/>
</dbReference>
<dbReference type="FunFam" id="3.40.50.720:FF:000023">
    <property type="entry name" value="Ketol-acid reductoisomerase (NADP(+))"/>
    <property type="match status" value="1"/>
</dbReference>
<dbReference type="Gene3D" id="6.10.240.10">
    <property type="match status" value="1"/>
</dbReference>
<dbReference type="Gene3D" id="3.40.50.720">
    <property type="entry name" value="NAD(P)-binding Rossmann-like Domain"/>
    <property type="match status" value="1"/>
</dbReference>
<dbReference type="HAMAP" id="MF_00435">
    <property type="entry name" value="IlvC"/>
    <property type="match status" value="1"/>
</dbReference>
<dbReference type="InterPro" id="IPR008927">
    <property type="entry name" value="6-PGluconate_DH-like_C_sf"/>
</dbReference>
<dbReference type="InterPro" id="IPR013023">
    <property type="entry name" value="KARI"/>
</dbReference>
<dbReference type="InterPro" id="IPR000506">
    <property type="entry name" value="KARI_C"/>
</dbReference>
<dbReference type="InterPro" id="IPR013116">
    <property type="entry name" value="KARI_N"/>
</dbReference>
<dbReference type="InterPro" id="IPR014359">
    <property type="entry name" value="KARI_prok"/>
</dbReference>
<dbReference type="InterPro" id="IPR036291">
    <property type="entry name" value="NAD(P)-bd_dom_sf"/>
</dbReference>
<dbReference type="NCBIfam" id="TIGR00465">
    <property type="entry name" value="ilvC"/>
    <property type="match status" value="1"/>
</dbReference>
<dbReference type="NCBIfam" id="NF004017">
    <property type="entry name" value="PRK05479.1"/>
    <property type="match status" value="1"/>
</dbReference>
<dbReference type="NCBIfam" id="NF009940">
    <property type="entry name" value="PRK13403.1"/>
    <property type="match status" value="1"/>
</dbReference>
<dbReference type="PANTHER" id="PTHR21371">
    <property type="entry name" value="KETOL-ACID REDUCTOISOMERASE, MITOCHONDRIAL"/>
    <property type="match status" value="1"/>
</dbReference>
<dbReference type="PANTHER" id="PTHR21371:SF1">
    <property type="entry name" value="KETOL-ACID REDUCTOISOMERASE, MITOCHONDRIAL"/>
    <property type="match status" value="1"/>
</dbReference>
<dbReference type="Pfam" id="PF01450">
    <property type="entry name" value="KARI_C"/>
    <property type="match status" value="1"/>
</dbReference>
<dbReference type="Pfam" id="PF07991">
    <property type="entry name" value="KARI_N"/>
    <property type="match status" value="1"/>
</dbReference>
<dbReference type="PIRSF" id="PIRSF000116">
    <property type="entry name" value="IlvC_gammaproteo"/>
    <property type="match status" value="1"/>
</dbReference>
<dbReference type="SUPFAM" id="SSF48179">
    <property type="entry name" value="6-phosphogluconate dehydrogenase C-terminal domain-like"/>
    <property type="match status" value="1"/>
</dbReference>
<dbReference type="SUPFAM" id="SSF51735">
    <property type="entry name" value="NAD(P)-binding Rossmann-fold domains"/>
    <property type="match status" value="1"/>
</dbReference>
<dbReference type="PROSITE" id="PS51851">
    <property type="entry name" value="KARI_C"/>
    <property type="match status" value="1"/>
</dbReference>
<dbReference type="PROSITE" id="PS51850">
    <property type="entry name" value="KARI_N"/>
    <property type="match status" value="1"/>
</dbReference>
<proteinExistence type="inferred from homology"/>
<organism>
    <name type="scientific">Staphylococcus aureus (strain JH1)</name>
    <dbReference type="NCBI Taxonomy" id="359787"/>
    <lineage>
        <taxon>Bacteria</taxon>
        <taxon>Bacillati</taxon>
        <taxon>Bacillota</taxon>
        <taxon>Bacilli</taxon>
        <taxon>Bacillales</taxon>
        <taxon>Staphylococcaceae</taxon>
        <taxon>Staphylococcus</taxon>
    </lineage>
</organism>